<proteinExistence type="inferred from homology"/>
<comment type="function">
    <text evidence="1">An essential GTPase which binds GTP, GDP and possibly (p)ppGpp with moderate affinity, with high nucleotide exchange rates and a fairly low GTP hydrolysis rate. Plays a role in control of the cell cycle, stress response, ribosome biogenesis and in those bacteria that undergo differentiation, in morphogenesis control.</text>
</comment>
<comment type="cofactor">
    <cofactor evidence="1">
        <name>Mg(2+)</name>
        <dbReference type="ChEBI" id="CHEBI:18420"/>
    </cofactor>
</comment>
<comment type="subunit">
    <text evidence="1">Monomer.</text>
</comment>
<comment type="subcellular location">
    <subcellularLocation>
        <location evidence="1">Cytoplasm</location>
    </subcellularLocation>
</comment>
<comment type="similarity">
    <text evidence="1">Belongs to the TRAFAC class OBG-HflX-like GTPase superfamily. OBG GTPase family.</text>
</comment>
<keyword id="KW-0963">Cytoplasm</keyword>
<keyword id="KW-0342">GTP-binding</keyword>
<keyword id="KW-0378">Hydrolase</keyword>
<keyword id="KW-0460">Magnesium</keyword>
<keyword id="KW-0479">Metal-binding</keyword>
<keyword id="KW-0547">Nucleotide-binding</keyword>
<keyword id="KW-1185">Reference proteome</keyword>
<gene>
    <name evidence="1" type="primary">obg</name>
    <name type="ordered locus">HD_0269</name>
</gene>
<reference key="1">
    <citation type="submission" date="2003-06" db="EMBL/GenBank/DDBJ databases">
        <title>The complete genome sequence of Haemophilus ducreyi.</title>
        <authorList>
            <person name="Munson R.S. Jr."/>
            <person name="Ray W.C."/>
            <person name="Mahairas G."/>
            <person name="Sabo P."/>
            <person name="Mungur R."/>
            <person name="Johnson L."/>
            <person name="Nguyen D."/>
            <person name="Wang J."/>
            <person name="Forst C."/>
            <person name="Hood L."/>
        </authorList>
    </citation>
    <scope>NUCLEOTIDE SEQUENCE [LARGE SCALE GENOMIC DNA]</scope>
    <source>
        <strain>35000HP / ATCC 700724</strain>
    </source>
</reference>
<name>OBG_HAEDU</name>
<sequence length="391" mass="43166">MKFIDEALIRVEAGDGGNGCVSFRREKYIPKGGPDGGDGGDGGDVYLIADENLNTLIDYRFEKRYAAGRGENGRSAGCTGHRGNDITLRVPVGTRAIDNDTKEVIGDLTQHGMKMLVAKGGYHGLGNTRFKSSVNRAPRQKTNGTAGEKRDLLLELMLLADVGMLGLPNAGKSTFIRSVSAAKPKVADYPFTTLVPSLGVARVGSDRSFVVADIPGLIEGAAEGAGLGIRFLKHLERCRVLIHLVDIMPIDESDPVQNITVIESELYQYSEKLADKPTWLVFNKIDTIGEEIAAEQAKNIAEQIGWQGDYYLISAATGQNVQQLTRDIMDFIEANPRQIIEENKALDEVKFKWDDYHQQAMQHPVEEDWSDFDDEWSEEDEEGVEIIYERG</sequence>
<organism>
    <name type="scientific">Haemophilus ducreyi (strain 35000HP / ATCC 700724)</name>
    <dbReference type="NCBI Taxonomy" id="233412"/>
    <lineage>
        <taxon>Bacteria</taxon>
        <taxon>Pseudomonadati</taxon>
        <taxon>Pseudomonadota</taxon>
        <taxon>Gammaproteobacteria</taxon>
        <taxon>Pasteurellales</taxon>
        <taxon>Pasteurellaceae</taxon>
        <taxon>Haemophilus</taxon>
    </lineage>
</organism>
<dbReference type="EC" id="3.6.5.-" evidence="1"/>
<dbReference type="EMBL" id="AE017143">
    <property type="protein sequence ID" value="AAP95250.1"/>
    <property type="molecule type" value="Genomic_DNA"/>
</dbReference>
<dbReference type="RefSeq" id="WP_010944303.1">
    <property type="nucleotide sequence ID" value="NC_002940.2"/>
</dbReference>
<dbReference type="SMR" id="Q7VP37"/>
<dbReference type="STRING" id="233412.HD_0269"/>
<dbReference type="KEGG" id="hdu:HD_0269"/>
<dbReference type="eggNOG" id="COG0536">
    <property type="taxonomic scope" value="Bacteria"/>
</dbReference>
<dbReference type="HOGENOM" id="CLU_011747_2_0_6"/>
<dbReference type="OrthoDB" id="9807318at2"/>
<dbReference type="Proteomes" id="UP000001022">
    <property type="component" value="Chromosome"/>
</dbReference>
<dbReference type="GO" id="GO:0005737">
    <property type="term" value="C:cytoplasm"/>
    <property type="evidence" value="ECO:0007669"/>
    <property type="project" value="UniProtKB-SubCell"/>
</dbReference>
<dbReference type="GO" id="GO:0005525">
    <property type="term" value="F:GTP binding"/>
    <property type="evidence" value="ECO:0007669"/>
    <property type="project" value="UniProtKB-UniRule"/>
</dbReference>
<dbReference type="GO" id="GO:0003924">
    <property type="term" value="F:GTPase activity"/>
    <property type="evidence" value="ECO:0007669"/>
    <property type="project" value="UniProtKB-UniRule"/>
</dbReference>
<dbReference type="GO" id="GO:0000287">
    <property type="term" value="F:magnesium ion binding"/>
    <property type="evidence" value="ECO:0007669"/>
    <property type="project" value="InterPro"/>
</dbReference>
<dbReference type="GO" id="GO:0042254">
    <property type="term" value="P:ribosome biogenesis"/>
    <property type="evidence" value="ECO:0007669"/>
    <property type="project" value="UniProtKB-UniRule"/>
</dbReference>
<dbReference type="CDD" id="cd01898">
    <property type="entry name" value="Obg"/>
    <property type="match status" value="1"/>
</dbReference>
<dbReference type="FunFam" id="2.70.210.12:FF:000001">
    <property type="entry name" value="GTPase Obg"/>
    <property type="match status" value="1"/>
</dbReference>
<dbReference type="Gene3D" id="2.70.210.12">
    <property type="entry name" value="GTP1/OBG domain"/>
    <property type="match status" value="1"/>
</dbReference>
<dbReference type="Gene3D" id="3.40.50.300">
    <property type="entry name" value="P-loop containing nucleotide triphosphate hydrolases"/>
    <property type="match status" value="1"/>
</dbReference>
<dbReference type="HAMAP" id="MF_01454">
    <property type="entry name" value="GTPase_Obg"/>
    <property type="match status" value="1"/>
</dbReference>
<dbReference type="InterPro" id="IPR031167">
    <property type="entry name" value="G_OBG"/>
</dbReference>
<dbReference type="InterPro" id="IPR006073">
    <property type="entry name" value="GTP-bd"/>
</dbReference>
<dbReference type="InterPro" id="IPR014100">
    <property type="entry name" value="GTP-bd_Obg/CgtA"/>
</dbReference>
<dbReference type="InterPro" id="IPR006074">
    <property type="entry name" value="GTP1-OBG_CS"/>
</dbReference>
<dbReference type="InterPro" id="IPR006169">
    <property type="entry name" value="GTP1_OBG_dom"/>
</dbReference>
<dbReference type="InterPro" id="IPR036726">
    <property type="entry name" value="GTP1_OBG_dom_sf"/>
</dbReference>
<dbReference type="InterPro" id="IPR045086">
    <property type="entry name" value="OBG_GTPase"/>
</dbReference>
<dbReference type="InterPro" id="IPR027417">
    <property type="entry name" value="P-loop_NTPase"/>
</dbReference>
<dbReference type="NCBIfam" id="TIGR02729">
    <property type="entry name" value="Obg_CgtA"/>
    <property type="match status" value="1"/>
</dbReference>
<dbReference type="NCBIfam" id="NF008955">
    <property type="entry name" value="PRK12297.1"/>
    <property type="match status" value="1"/>
</dbReference>
<dbReference type="NCBIfam" id="NF008956">
    <property type="entry name" value="PRK12299.1"/>
    <property type="match status" value="1"/>
</dbReference>
<dbReference type="PANTHER" id="PTHR11702">
    <property type="entry name" value="DEVELOPMENTALLY REGULATED GTP-BINDING PROTEIN-RELATED"/>
    <property type="match status" value="1"/>
</dbReference>
<dbReference type="PANTHER" id="PTHR11702:SF31">
    <property type="entry name" value="MITOCHONDRIAL RIBOSOME-ASSOCIATED GTPASE 2"/>
    <property type="match status" value="1"/>
</dbReference>
<dbReference type="Pfam" id="PF01018">
    <property type="entry name" value="GTP1_OBG"/>
    <property type="match status" value="1"/>
</dbReference>
<dbReference type="Pfam" id="PF01926">
    <property type="entry name" value="MMR_HSR1"/>
    <property type="match status" value="1"/>
</dbReference>
<dbReference type="PIRSF" id="PIRSF002401">
    <property type="entry name" value="GTP_bd_Obg/CgtA"/>
    <property type="match status" value="1"/>
</dbReference>
<dbReference type="PRINTS" id="PR00326">
    <property type="entry name" value="GTP1OBG"/>
</dbReference>
<dbReference type="SUPFAM" id="SSF82051">
    <property type="entry name" value="Obg GTP-binding protein N-terminal domain"/>
    <property type="match status" value="1"/>
</dbReference>
<dbReference type="SUPFAM" id="SSF52540">
    <property type="entry name" value="P-loop containing nucleoside triphosphate hydrolases"/>
    <property type="match status" value="1"/>
</dbReference>
<dbReference type="PROSITE" id="PS51710">
    <property type="entry name" value="G_OBG"/>
    <property type="match status" value="1"/>
</dbReference>
<dbReference type="PROSITE" id="PS00905">
    <property type="entry name" value="GTP1_OBG"/>
    <property type="match status" value="1"/>
</dbReference>
<dbReference type="PROSITE" id="PS51883">
    <property type="entry name" value="OBG"/>
    <property type="match status" value="1"/>
</dbReference>
<feature type="chain" id="PRO_0000385961" description="GTPase Obg">
    <location>
        <begin position="1"/>
        <end position="391"/>
    </location>
</feature>
<feature type="domain" description="Obg" evidence="2">
    <location>
        <begin position="1"/>
        <end position="159"/>
    </location>
</feature>
<feature type="domain" description="OBG-type G" evidence="1">
    <location>
        <begin position="160"/>
        <end position="333"/>
    </location>
</feature>
<feature type="binding site" evidence="1">
    <location>
        <begin position="166"/>
        <end position="173"/>
    </location>
    <ligand>
        <name>GTP</name>
        <dbReference type="ChEBI" id="CHEBI:37565"/>
    </ligand>
</feature>
<feature type="binding site" evidence="1">
    <location>
        <position position="173"/>
    </location>
    <ligand>
        <name>Mg(2+)</name>
        <dbReference type="ChEBI" id="CHEBI:18420"/>
    </ligand>
</feature>
<feature type="binding site" evidence="1">
    <location>
        <begin position="191"/>
        <end position="195"/>
    </location>
    <ligand>
        <name>GTP</name>
        <dbReference type="ChEBI" id="CHEBI:37565"/>
    </ligand>
</feature>
<feature type="binding site" evidence="1">
    <location>
        <position position="193"/>
    </location>
    <ligand>
        <name>Mg(2+)</name>
        <dbReference type="ChEBI" id="CHEBI:18420"/>
    </ligand>
</feature>
<feature type="binding site" evidence="1">
    <location>
        <begin position="213"/>
        <end position="216"/>
    </location>
    <ligand>
        <name>GTP</name>
        <dbReference type="ChEBI" id="CHEBI:37565"/>
    </ligand>
</feature>
<feature type="binding site" evidence="1">
    <location>
        <begin position="283"/>
        <end position="286"/>
    </location>
    <ligand>
        <name>GTP</name>
        <dbReference type="ChEBI" id="CHEBI:37565"/>
    </ligand>
</feature>
<feature type="binding site" evidence="1">
    <location>
        <begin position="314"/>
        <end position="316"/>
    </location>
    <ligand>
        <name>GTP</name>
        <dbReference type="ChEBI" id="CHEBI:37565"/>
    </ligand>
</feature>
<accession>Q7VP37</accession>
<protein>
    <recommendedName>
        <fullName evidence="1">GTPase Obg</fullName>
        <ecNumber evidence="1">3.6.5.-</ecNumber>
    </recommendedName>
    <alternativeName>
        <fullName evidence="1">GTP-binding protein Obg</fullName>
    </alternativeName>
</protein>
<evidence type="ECO:0000255" key="1">
    <source>
        <dbReference type="HAMAP-Rule" id="MF_01454"/>
    </source>
</evidence>
<evidence type="ECO:0000255" key="2">
    <source>
        <dbReference type="PROSITE-ProRule" id="PRU01231"/>
    </source>
</evidence>